<accession>A1JNW9</accession>
<name>ANMK_YERE8</name>
<gene>
    <name evidence="1" type="primary">anmK</name>
    <name type="ordered locus">YE2142</name>
</gene>
<organism>
    <name type="scientific">Yersinia enterocolitica serotype O:8 / biotype 1B (strain NCTC 13174 / 8081)</name>
    <dbReference type="NCBI Taxonomy" id="393305"/>
    <lineage>
        <taxon>Bacteria</taxon>
        <taxon>Pseudomonadati</taxon>
        <taxon>Pseudomonadota</taxon>
        <taxon>Gammaproteobacteria</taxon>
        <taxon>Enterobacterales</taxon>
        <taxon>Yersiniaceae</taxon>
        <taxon>Yersinia</taxon>
    </lineage>
</organism>
<sequence length="370" mass="39495">MKSGRFIGVMSGTSLDGIDVVLAAIDERMVAQQASYCHPMPLQLKKDILGMCQGQSTTLSAVGKLDAQLGILFAEAVLALLAKAGLTAQDITAIGCHGQTVWHEPLGEPAFTMQLGDNNRIAAMTKIATVGDFRRRDMAYGGQGAPLVPAFHHALLAHSTERRMVLNIGGIANLSMLLPDLPVRGFDTGPGNMLMDAWIWRNRSLPYDKDAAWALSGQVNQPLLELMYSDPYFAKPAPKSTGREYFNAGWLDKQLNKIPGIKPEDVQATLAELTALSVAEQVQLAGGCERLLVCGGGARNPLVMSRMSTLLPGTEVCVTDDFGVSGDDMEALAFAWLAFRTLSGKSGNLPSVTGASCETILGAVYPVSSR</sequence>
<feature type="chain" id="PRO_1000067373" description="Anhydro-N-acetylmuramic acid kinase">
    <location>
        <begin position="1"/>
        <end position="370"/>
    </location>
</feature>
<feature type="binding site" evidence="1">
    <location>
        <begin position="12"/>
        <end position="19"/>
    </location>
    <ligand>
        <name>ATP</name>
        <dbReference type="ChEBI" id="CHEBI:30616"/>
    </ligand>
</feature>
<evidence type="ECO:0000255" key="1">
    <source>
        <dbReference type="HAMAP-Rule" id="MF_01270"/>
    </source>
</evidence>
<dbReference type="EC" id="2.7.1.170" evidence="1"/>
<dbReference type="EMBL" id="AM286415">
    <property type="protein sequence ID" value="CAL12212.1"/>
    <property type="molecule type" value="Genomic_DNA"/>
</dbReference>
<dbReference type="RefSeq" id="WP_005165918.1">
    <property type="nucleotide sequence ID" value="NC_008800.1"/>
</dbReference>
<dbReference type="RefSeq" id="YP_001006382.1">
    <property type="nucleotide sequence ID" value="NC_008800.1"/>
</dbReference>
<dbReference type="SMR" id="A1JNW9"/>
<dbReference type="GeneID" id="31408963"/>
<dbReference type="KEGG" id="yen:YE2142"/>
<dbReference type="PATRIC" id="fig|393305.7.peg.2305"/>
<dbReference type="eggNOG" id="COG2377">
    <property type="taxonomic scope" value="Bacteria"/>
</dbReference>
<dbReference type="HOGENOM" id="CLU_038782_0_0_6"/>
<dbReference type="OrthoDB" id="9763949at2"/>
<dbReference type="UniPathway" id="UPA00343"/>
<dbReference type="UniPathway" id="UPA00544"/>
<dbReference type="Proteomes" id="UP000000642">
    <property type="component" value="Chromosome"/>
</dbReference>
<dbReference type="GO" id="GO:0005524">
    <property type="term" value="F:ATP binding"/>
    <property type="evidence" value="ECO:0007669"/>
    <property type="project" value="UniProtKB-UniRule"/>
</dbReference>
<dbReference type="GO" id="GO:0016301">
    <property type="term" value="F:kinase activity"/>
    <property type="evidence" value="ECO:0007669"/>
    <property type="project" value="UniProtKB-KW"/>
</dbReference>
<dbReference type="GO" id="GO:0016773">
    <property type="term" value="F:phosphotransferase activity, alcohol group as acceptor"/>
    <property type="evidence" value="ECO:0007669"/>
    <property type="project" value="UniProtKB-UniRule"/>
</dbReference>
<dbReference type="GO" id="GO:0097175">
    <property type="term" value="P:1,6-anhydro-N-acetyl-beta-muramic acid catabolic process"/>
    <property type="evidence" value="ECO:0007669"/>
    <property type="project" value="UniProtKB-UniRule"/>
</dbReference>
<dbReference type="GO" id="GO:0006040">
    <property type="term" value="P:amino sugar metabolic process"/>
    <property type="evidence" value="ECO:0007669"/>
    <property type="project" value="InterPro"/>
</dbReference>
<dbReference type="GO" id="GO:0009254">
    <property type="term" value="P:peptidoglycan turnover"/>
    <property type="evidence" value="ECO:0007669"/>
    <property type="project" value="UniProtKB-UniRule"/>
</dbReference>
<dbReference type="CDD" id="cd24050">
    <property type="entry name" value="ASKHA_NBD_ANMK"/>
    <property type="match status" value="1"/>
</dbReference>
<dbReference type="Gene3D" id="3.30.420.40">
    <property type="match status" value="2"/>
</dbReference>
<dbReference type="HAMAP" id="MF_01270">
    <property type="entry name" value="AnhMurNAc_kinase"/>
    <property type="match status" value="1"/>
</dbReference>
<dbReference type="InterPro" id="IPR005338">
    <property type="entry name" value="Anhydro_N_Ac-Mur_kinase"/>
</dbReference>
<dbReference type="InterPro" id="IPR043129">
    <property type="entry name" value="ATPase_NBD"/>
</dbReference>
<dbReference type="NCBIfam" id="NF007138">
    <property type="entry name" value="PRK09585.1-1"/>
    <property type="match status" value="1"/>
</dbReference>
<dbReference type="NCBIfam" id="NF007139">
    <property type="entry name" value="PRK09585.1-3"/>
    <property type="match status" value="1"/>
</dbReference>
<dbReference type="NCBIfam" id="NF007148">
    <property type="entry name" value="PRK09585.3-2"/>
    <property type="match status" value="1"/>
</dbReference>
<dbReference type="PANTHER" id="PTHR30605">
    <property type="entry name" value="ANHYDRO-N-ACETYLMURAMIC ACID KINASE"/>
    <property type="match status" value="1"/>
</dbReference>
<dbReference type="PANTHER" id="PTHR30605:SF0">
    <property type="entry name" value="ANHYDRO-N-ACETYLMURAMIC ACID KINASE"/>
    <property type="match status" value="1"/>
</dbReference>
<dbReference type="Pfam" id="PF03702">
    <property type="entry name" value="AnmK"/>
    <property type="match status" value="1"/>
</dbReference>
<dbReference type="SUPFAM" id="SSF53067">
    <property type="entry name" value="Actin-like ATPase domain"/>
    <property type="match status" value="1"/>
</dbReference>
<proteinExistence type="inferred from homology"/>
<reference key="1">
    <citation type="journal article" date="2006" name="PLoS Genet.">
        <title>The complete genome sequence and comparative genome analysis of the high pathogenicity Yersinia enterocolitica strain 8081.</title>
        <authorList>
            <person name="Thomson N.R."/>
            <person name="Howard S."/>
            <person name="Wren B.W."/>
            <person name="Holden M.T.G."/>
            <person name="Crossman L."/>
            <person name="Challis G.L."/>
            <person name="Churcher C."/>
            <person name="Mungall K."/>
            <person name="Brooks K."/>
            <person name="Chillingworth T."/>
            <person name="Feltwell T."/>
            <person name="Abdellah Z."/>
            <person name="Hauser H."/>
            <person name="Jagels K."/>
            <person name="Maddison M."/>
            <person name="Moule S."/>
            <person name="Sanders M."/>
            <person name="Whitehead S."/>
            <person name="Quail M.A."/>
            <person name="Dougan G."/>
            <person name="Parkhill J."/>
            <person name="Prentice M.B."/>
        </authorList>
    </citation>
    <scope>NUCLEOTIDE SEQUENCE [LARGE SCALE GENOMIC DNA]</scope>
    <source>
        <strain>NCTC 13174 / 8081</strain>
    </source>
</reference>
<keyword id="KW-0067">ATP-binding</keyword>
<keyword id="KW-0119">Carbohydrate metabolism</keyword>
<keyword id="KW-0418">Kinase</keyword>
<keyword id="KW-0547">Nucleotide-binding</keyword>
<keyword id="KW-0808">Transferase</keyword>
<protein>
    <recommendedName>
        <fullName evidence="1">Anhydro-N-acetylmuramic acid kinase</fullName>
        <ecNumber evidence="1">2.7.1.170</ecNumber>
    </recommendedName>
    <alternativeName>
        <fullName evidence="1">AnhMurNAc kinase</fullName>
    </alternativeName>
</protein>
<comment type="function">
    <text evidence="1">Catalyzes the specific phosphorylation of 1,6-anhydro-N-acetylmuramic acid (anhMurNAc) with the simultaneous cleavage of the 1,6-anhydro ring, generating MurNAc-6-P. Is required for the utilization of anhMurNAc either imported from the medium or derived from its own cell wall murein, and thus plays a role in cell wall recycling.</text>
</comment>
<comment type="catalytic activity">
    <reaction evidence="1">
        <text>1,6-anhydro-N-acetyl-beta-muramate + ATP + H2O = N-acetyl-D-muramate 6-phosphate + ADP + H(+)</text>
        <dbReference type="Rhea" id="RHEA:24952"/>
        <dbReference type="ChEBI" id="CHEBI:15377"/>
        <dbReference type="ChEBI" id="CHEBI:15378"/>
        <dbReference type="ChEBI" id="CHEBI:30616"/>
        <dbReference type="ChEBI" id="CHEBI:58690"/>
        <dbReference type="ChEBI" id="CHEBI:58722"/>
        <dbReference type="ChEBI" id="CHEBI:456216"/>
        <dbReference type="EC" id="2.7.1.170"/>
    </reaction>
</comment>
<comment type="pathway">
    <text evidence="1">Amino-sugar metabolism; 1,6-anhydro-N-acetylmuramate degradation.</text>
</comment>
<comment type="pathway">
    <text evidence="1">Cell wall biogenesis; peptidoglycan recycling.</text>
</comment>
<comment type="similarity">
    <text evidence="1">Belongs to the anhydro-N-acetylmuramic acid kinase family.</text>
</comment>